<proteinExistence type="evidence at protein level"/>
<gene>
    <name type="primary">Sox10</name>
    <name type="synonym">Sox-10</name>
    <name type="synonym">Sox21</name>
</gene>
<evidence type="ECO:0000250" key="1">
    <source>
        <dbReference type="UniProtKB" id="O55170"/>
    </source>
</evidence>
<evidence type="ECO:0000250" key="2">
    <source>
        <dbReference type="UniProtKB" id="P48436"/>
    </source>
</evidence>
<evidence type="ECO:0000250" key="3">
    <source>
        <dbReference type="UniProtKB" id="P56693"/>
    </source>
</evidence>
<evidence type="ECO:0000255" key="4">
    <source>
        <dbReference type="PROSITE-ProRule" id="PRU00267"/>
    </source>
</evidence>
<evidence type="ECO:0000256" key="5">
    <source>
        <dbReference type="SAM" id="MobiDB-lite"/>
    </source>
</evidence>
<evidence type="ECO:0000269" key="6">
    <source>
    </source>
</evidence>
<evidence type="ECO:0000269" key="7">
    <source>
    </source>
</evidence>
<evidence type="ECO:0000269" key="8">
    <source>
    </source>
</evidence>
<evidence type="ECO:0000269" key="9">
    <source>
    </source>
</evidence>
<evidence type="ECO:0000269" key="10">
    <source>
    </source>
</evidence>
<evidence type="ECO:0000269" key="11">
    <source>
    </source>
</evidence>
<evidence type="ECO:0000305" key="12"/>
<organism>
    <name type="scientific">Mus musculus</name>
    <name type="common">Mouse</name>
    <dbReference type="NCBI Taxonomy" id="10090"/>
    <lineage>
        <taxon>Eukaryota</taxon>
        <taxon>Metazoa</taxon>
        <taxon>Chordata</taxon>
        <taxon>Craniata</taxon>
        <taxon>Vertebrata</taxon>
        <taxon>Euteleostomi</taxon>
        <taxon>Mammalia</taxon>
        <taxon>Eutheria</taxon>
        <taxon>Euarchontoglires</taxon>
        <taxon>Glires</taxon>
        <taxon>Rodentia</taxon>
        <taxon>Myomorpha</taxon>
        <taxon>Muroidea</taxon>
        <taxon>Muridae</taxon>
        <taxon>Murinae</taxon>
        <taxon>Mus</taxon>
        <taxon>Mus</taxon>
    </lineage>
</organism>
<name>SOX10_MOUSE</name>
<reference key="1">
    <citation type="journal article" date="1998" name="Nat. Genet.">
        <title>Sox10 mutation disrupts neural crest development in Dom Hirschsprung mouse model.</title>
        <authorList>
            <person name="Southard-Smith E.M."/>
            <person name="Kos L."/>
            <person name="Pavan W.J."/>
        </authorList>
    </citation>
    <scope>NUCLEOTIDE SEQUENCE [MRNA]</scope>
    <scope>DISRUPTION PHENOTYPE</scope>
    <source>
        <strain>C57BL/6J</strain>
    </source>
</reference>
<reference key="2">
    <citation type="journal article" date="1998" name="Proc. Natl. Acad. Sci. U.S.A.">
        <title>Mutation of the Sry-related Sox10 gene in Dominant megacolon, a mouse model for human Hirschsprung disease.</title>
        <authorList>
            <person name="Herbarth B."/>
            <person name="Pingault V."/>
            <person name="Bondurand N."/>
            <person name="Kuhlbrodt K."/>
            <person name="Hermans-Borgmeyer I."/>
            <person name="Puliti A."/>
            <person name="Lemort N."/>
            <person name="Goossens M."/>
            <person name="Wegner M."/>
        </authorList>
    </citation>
    <scope>NUCLEOTIDE SEQUENCE [MRNA]</scope>
    <scope>DISRUPTION PHENOTYPE</scope>
    <scope>SUBCELLULAR LOCATION</scope>
    <source>
        <strain>C57BL/6J</strain>
    </source>
</reference>
<reference key="3">
    <citation type="journal article" date="1998" name="Hum. Genet.">
        <title>The SOX10/Sox10 gene from human and mouse: sequence, expression, and transactivation by the encoded HMG domain transcription factor.</title>
        <authorList>
            <person name="Pusch C."/>
            <person name="Hustert E."/>
            <person name="Pfeifer D."/>
            <person name="Sudbeck P."/>
            <person name="Kist R."/>
            <person name="Roe B."/>
            <person name="Wang Z."/>
            <person name="Balling R."/>
            <person name="Blin N."/>
            <person name="Scherer G."/>
        </authorList>
    </citation>
    <scope>NUCLEOTIDE SEQUENCE [MRNA]</scope>
</reference>
<reference key="4">
    <citation type="journal article" date="1997" name="Genomics">
        <title>Isolation of a novel Sry-related gene that is expressed in high-metastatic K-1735 murine melanoma cells.</title>
        <authorList>
            <person name="Tani M."/>
            <person name="Shindo-Okada N."/>
            <person name="Hashimoto Y."/>
            <person name="Shiroishi T."/>
            <person name="Takenoshita S."/>
            <person name="Nagamachi Y."/>
            <person name="Yokota J."/>
        </authorList>
    </citation>
    <scope>NUCLEOTIDE SEQUENCE [MRNA]</scope>
    <source>
        <strain>C3H/HeN</strain>
    </source>
</reference>
<reference key="5">
    <citation type="journal article" date="2004" name="Genome Res.">
        <title>The status, quality, and expansion of the NIH full-length cDNA project: the Mammalian Gene Collection (MGC).</title>
        <authorList>
            <consortium name="The MGC Project Team"/>
        </authorList>
    </citation>
    <scope>NUCLEOTIDE SEQUENCE [LARGE SCALE MRNA]</scope>
    <source>
        <strain>C57BL/6J</strain>
        <strain>FVB/N</strain>
        <tissue>Mammary gland</tissue>
        <tissue>Salivary gland</tissue>
    </source>
</reference>
<reference key="6">
    <citation type="journal article" date="1993" name="Nucleic Acids Res.">
        <title>Seven new members of the Sox gene family expressed during mouse development.</title>
        <authorList>
            <person name="Wright E.M."/>
            <person name="Snopek B."/>
            <person name="Koopman P."/>
        </authorList>
    </citation>
    <scope>NUCLEOTIDE SEQUENCE [MRNA] OF 112-167</scope>
</reference>
<reference key="7">
    <citation type="journal article" date="1996" name="Genomics">
        <title>Numerous members of the Sox family of HMG box-containing genes are expressed in developing mouse teeth.</title>
        <authorList>
            <person name="Stock D.W."/>
            <person name="Buchanan A.V."/>
            <person name="Zhao Z."/>
            <person name="Weiss K.M."/>
        </authorList>
    </citation>
    <scope>NUCLEOTIDE SEQUENCE [MRNA] OF 114-167</scope>
    <source>
        <strain>Swiss Webster</strain>
        <tissue>Embryonic tooth</tissue>
    </source>
</reference>
<reference key="8">
    <citation type="journal article" date="2009" name="J. Biol. Chem.">
        <title>The armadillo repeat-containing protein, ARMCX3, physically and functionally interacts with the developmental regulatory factor Sox10.</title>
        <authorList>
            <person name="Mou Z."/>
            <person name="Tapper A.R."/>
            <person name="Gardner P.D."/>
        </authorList>
    </citation>
    <scope>SUBCELLULAR LOCATION</scope>
    <scope>INTERACTION WITH ARMCX3</scope>
</reference>
<reference key="9">
    <citation type="journal article" date="2013" name="PLoS Genet.">
        <title>The transcription factors Sox10 and Myrf define an essential regulatory network module in differentiating oligodendrocytes.</title>
        <authorList>
            <person name="Hornig J."/>
            <person name="Froeb F."/>
            <person name="Vogl M.R."/>
            <person name="Hermans-Borgmeyer I."/>
            <person name="Tamm E.R."/>
            <person name="Wegner M."/>
        </authorList>
    </citation>
    <scope>FUNCTION</scope>
</reference>
<reference key="10">
    <citation type="journal article" date="2016" name="Glia">
        <title>The dual-specificity phosphatase Dusp15 is regulated by Sox10 and Myrf in myelinating oligodendrocytes.</title>
        <authorList>
            <person name="Muth K.N."/>
            <person name="Piefke S."/>
            <person name="Weider M."/>
            <person name="Sock E."/>
            <person name="Hermans-Borgmeyer I."/>
            <person name="Wegner M."/>
            <person name="Kuespert M."/>
        </authorList>
    </citation>
    <scope>FUNCTION</scope>
    <scope>SUBUNIT</scope>
</reference>
<reference key="11">
    <citation type="journal article" date="2016" name="J. Neurochem.">
        <title>Sox13 functionally complements the related Sox5 and Sox6 as important developmental modulators in mouse spinal cord oligodendrocytes.</title>
        <authorList>
            <person name="Baroti T."/>
            <person name="Schillinger A."/>
            <person name="Wegner M."/>
            <person name="Stolt C.C."/>
        </authorList>
    </citation>
    <scope>DEVELOPMENTAL STAGE</scope>
    <scope>TISSUE SPECIFICITY</scope>
</reference>
<comment type="function">
    <text evidence="1 3 7 9">Transcription factor that plays a central role in developing and mature glia (PubMed:24204311, PubMed:27532821). Specifically activates expression of myelin genes, during oligodendrocyte (OL) maturation, such as DUSP15 and MYRF, thereby playing a central role in oligodendrocyte maturation and CNS myelination (PubMed:24204311, PubMed:27532821). Once induced, MYRF cooperates with SOX10 to implement the myelination program (PubMed:24204311). Transcriptional activator of MITF, acting synergistically with PAX3 (By similarity). Transcriptional activator of MBP, via binding to the gene promoter (By similarity).</text>
</comment>
<comment type="subunit">
    <text evidence="3 6 9">Monomer (PubMed:27532821). Interacts with Armcx3 at the mitochondrial outer membrane surface (PubMed:19304657). Interacts with PAX3 (By similarity).</text>
</comment>
<comment type="subcellular location">
    <subcellularLocation>
        <location evidence="6">Cytoplasm</location>
    </subcellularLocation>
    <subcellularLocation>
        <location evidence="6 11">Nucleus</location>
    </subcellularLocation>
    <subcellularLocation>
        <location>Mitochondrion outer membrane</location>
        <topology>Peripheral membrane protein</topology>
        <orientation evidence="6">Cytoplasmic side</orientation>
    </subcellularLocation>
</comment>
<comment type="tissue specificity">
    <text evidence="8">Expressed in oligodendroglia of the spinal tube (at protein level).</text>
</comment>
<comment type="developmental stage">
    <text evidence="8">Expressed in the motor neuron progenitor domain of the spinal tube from 11.5 dpc to postnatal day 6.</text>
</comment>
<comment type="domain">
    <text evidence="2">The transactivation domains TAM and TAC (for transactivation domain in the middle and at the C-terminus, respectively) are required to contact transcriptional coactivators and basal transcriptional machinery components and thereby induce gene transactivation.</text>
</comment>
<comment type="disruption phenotype">
    <text evidence="10 11">Defects in Sox10 are the cause of the mouse mutant dominant megacolon (dom). While dom/+ heterozygous mice display regional deficiencies of neural crest-derived enteric ganglia in the distal colon, dom/dom homozygous animals are embryonic lethal.</text>
</comment>
<comment type="sequence caution" evidence="12">
    <conflict type="frameshift">
        <sequence resource="EMBL-CDS" id="AAB49282"/>
    </conflict>
</comment>
<comment type="sequence caution" evidence="12">
    <conflict type="erroneous initiation">
        <sequence resource="EMBL-CDS" id="AAB99738"/>
    </conflict>
</comment>
<protein>
    <recommendedName>
        <fullName>Transcription factor SOX-10</fullName>
    </recommendedName>
    <alternativeName>
        <fullName>Protein SOX-21</fullName>
    </alternativeName>
    <alternativeName>
        <fullName>Transcription factor SOX-M</fullName>
    </alternativeName>
</protein>
<feature type="chain" id="PRO_0000048747" description="Transcription factor SOX-10">
    <location>
        <begin position="1"/>
        <end position="466"/>
    </location>
</feature>
<feature type="DNA-binding region" description="HMG box" evidence="4">
    <location>
        <begin position="104"/>
        <end position="172"/>
    </location>
</feature>
<feature type="region of interest" description="Disordered" evidence="5">
    <location>
        <begin position="1"/>
        <end position="67"/>
    </location>
</feature>
<feature type="region of interest" description="Dimerization (DIM)" evidence="3">
    <location>
        <begin position="62"/>
        <end position="102"/>
    </location>
</feature>
<feature type="region of interest" description="Disordered" evidence="5">
    <location>
        <begin position="160"/>
        <end position="200"/>
    </location>
</feature>
<feature type="region of interest" description="Disordered" evidence="5">
    <location>
        <begin position="213"/>
        <end position="275"/>
    </location>
</feature>
<feature type="region of interest" description="Transactivation domain (TAM)" evidence="3">
    <location>
        <begin position="228"/>
        <end position="310"/>
    </location>
</feature>
<feature type="region of interest" description="Disordered" evidence="5">
    <location>
        <begin position="344"/>
        <end position="375"/>
    </location>
</feature>
<feature type="region of interest" description="Transactivation domain (TAC)" evidence="3">
    <location>
        <begin position="353"/>
        <end position="466"/>
    </location>
</feature>
<feature type="region of interest" description="Disordered" evidence="5">
    <location>
        <begin position="433"/>
        <end position="466"/>
    </location>
</feature>
<feature type="compositionally biased region" description="Low complexity" evidence="5">
    <location>
        <begin position="23"/>
        <end position="32"/>
    </location>
</feature>
<feature type="compositionally biased region" description="Basic and acidic residues" evidence="5">
    <location>
        <begin position="160"/>
        <end position="173"/>
    </location>
</feature>
<feature type="compositionally biased region" description="Low complexity" evidence="5">
    <location>
        <begin position="183"/>
        <end position="200"/>
    </location>
</feature>
<feature type="compositionally biased region" description="Basic and acidic residues" evidence="5">
    <location>
        <begin position="254"/>
        <end position="271"/>
    </location>
</feature>
<feature type="compositionally biased region" description="Polar residues" evidence="5">
    <location>
        <begin position="440"/>
        <end position="466"/>
    </location>
</feature>
<feature type="modified residue" description="Phosphoserine" evidence="3">
    <location>
        <position position="24"/>
    </location>
</feature>
<feature type="sequence variant">
    <original>E</original>
    <variation>V</variation>
    <location>
        <position position="11"/>
    </location>
</feature>
<feature type="sequence conflict" description="In Ref. 4; AAB49282." evidence="12" ref="4">
    <original>G</original>
    <variation>V</variation>
    <location>
        <position position="41"/>
    </location>
</feature>
<feature type="sequence conflict" description="In Ref. 6; CAA79484." evidence="12" ref="6">
    <original>R</original>
    <variation>P</variation>
    <location>
        <position position="119"/>
    </location>
</feature>
<feature type="sequence conflict" description="In Ref. 4; AAB49282." evidence="12" ref="4">
    <original>K</original>
    <variation>E</variation>
    <location>
        <position position="357"/>
    </location>
</feature>
<sequence>MAEEQDLSEVELSPVGSEEPRCLSPGSAPSLGPDGGGGGSGLRASPGPGELGKVKKEQQDGEADDDKFPVCIREAVSQVLSGYDWTLVPMPVRVNGASKSKPHVKRPMNAFMVWAQAARRKLADQYPHLHNAELSKTLGKLWRLLNESDKRPFIEEAERLRMQHKKDHPDYKYQPRRRKNGKAAQGEAECPGGEAEQGGAAAIQAHYKSAHLDHRHPEEGSPMSDGNPEHPSGQSHGPPTPPTTPKTELQSGKADPKRDGRSLGEGGKPHIDFGNVDIGEISHEVMSNMETFDVTELDQYLPPNGHPGHVGSYSAAGYGLGSALAVASGHSAWISKPPGVALPTVSPPGVDAKAQVKTETTGPQGPPHYTDQPSTSQIAYTSLSLPHYGSAFPSISRPQFDYSDHQPSGPYYGHAGQASGLYSAFSYMGPSQRPLYTAISDPSPSGPQSHSPTHWEQPVYTTLSRP</sequence>
<dbReference type="EMBL" id="AF017182">
    <property type="protein sequence ID" value="AAB99738.1"/>
    <property type="status" value="ALT_INIT"/>
    <property type="molecule type" value="mRNA"/>
</dbReference>
<dbReference type="EMBL" id="AF047043">
    <property type="protein sequence ID" value="AAC24564.1"/>
    <property type="molecule type" value="mRNA"/>
</dbReference>
<dbReference type="EMBL" id="U66141">
    <property type="protein sequence ID" value="AAB49282.1"/>
    <property type="status" value="ALT_FRAME"/>
    <property type="molecule type" value="mRNA"/>
</dbReference>
<dbReference type="EMBL" id="BC018551">
    <property type="protein sequence ID" value="AAH18551.1"/>
    <property type="molecule type" value="mRNA"/>
</dbReference>
<dbReference type="EMBL" id="BC023356">
    <property type="protein sequence ID" value="AAH23356.1"/>
    <property type="molecule type" value="mRNA"/>
</dbReference>
<dbReference type="EMBL" id="BC025171">
    <property type="protein sequence ID" value="AAH25171.1"/>
    <property type="molecule type" value="mRNA"/>
</dbReference>
<dbReference type="EMBL" id="Z18959">
    <property type="protein sequence ID" value="CAA79484.1"/>
    <property type="molecule type" value="mRNA"/>
</dbReference>
<dbReference type="EMBL" id="U70441">
    <property type="protein sequence ID" value="AAC52859.1"/>
    <property type="molecule type" value="mRNA"/>
</dbReference>
<dbReference type="CCDS" id="CCDS49668.1"/>
<dbReference type="PIR" id="S30242">
    <property type="entry name" value="S30242"/>
</dbReference>
<dbReference type="RefSeq" id="NP_035567.1">
    <property type="nucleotide sequence ID" value="NM_011437.1"/>
</dbReference>
<dbReference type="SMR" id="Q04888"/>
<dbReference type="BioGRID" id="203397">
    <property type="interactions" value="3"/>
</dbReference>
<dbReference type="FunCoup" id="Q04888">
    <property type="interactions" value="759"/>
</dbReference>
<dbReference type="STRING" id="10090.ENSMUSP00000155574"/>
<dbReference type="iPTMnet" id="Q04888"/>
<dbReference type="PhosphoSitePlus" id="Q04888"/>
<dbReference type="PaxDb" id="10090-ENSMUSP00000039466"/>
<dbReference type="PeptideAtlas" id="Q04888"/>
<dbReference type="ProteomicsDB" id="257378"/>
<dbReference type="Antibodypedia" id="3774">
    <property type="antibodies" value="1058 antibodies from 48 providers"/>
</dbReference>
<dbReference type="Ensembl" id="ENSMUST00000040019.5">
    <property type="protein sequence ID" value="ENSMUSP00000039466.5"/>
    <property type="gene ID" value="ENSMUSG00000033006.11"/>
</dbReference>
<dbReference type="Ensembl" id="ENSMUST00000230532.2">
    <property type="protein sequence ID" value="ENSMUSP00000155574.2"/>
    <property type="gene ID" value="ENSMUSG00000033006.11"/>
</dbReference>
<dbReference type="GeneID" id="20665"/>
<dbReference type="KEGG" id="mmu:20665"/>
<dbReference type="UCSC" id="uc007wsu.2">
    <property type="organism name" value="mouse"/>
</dbReference>
<dbReference type="AGR" id="MGI:98358"/>
<dbReference type="CTD" id="6663"/>
<dbReference type="MGI" id="MGI:98358">
    <property type="gene designation" value="Sox10"/>
</dbReference>
<dbReference type="VEuPathDB" id="HostDB:ENSMUSG00000033006"/>
<dbReference type="eggNOG" id="KOG0527">
    <property type="taxonomic scope" value="Eukaryota"/>
</dbReference>
<dbReference type="GeneTree" id="ENSGT00940000158046"/>
<dbReference type="HOGENOM" id="CLU_031800_0_0_1"/>
<dbReference type="InParanoid" id="Q04888"/>
<dbReference type="OMA" id="ATIQAHY"/>
<dbReference type="OrthoDB" id="6247875at2759"/>
<dbReference type="PhylomeDB" id="Q04888"/>
<dbReference type="Reactome" id="R-MMU-9856649">
    <property type="pathway name" value="Transcriptional and post-translational regulation of MITF-M expression and activity"/>
</dbReference>
<dbReference type="BioGRID-ORCS" id="20665">
    <property type="hits" value="7 hits in 77 CRISPR screens"/>
</dbReference>
<dbReference type="ChiTaRS" id="Sox10">
    <property type="organism name" value="mouse"/>
</dbReference>
<dbReference type="PRO" id="PR:Q04888"/>
<dbReference type="Proteomes" id="UP000000589">
    <property type="component" value="Chromosome 15"/>
</dbReference>
<dbReference type="RNAct" id="Q04888">
    <property type="molecule type" value="protein"/>
</dbReference>
<dbReference type="Bgee" id="ENSMUSG00000033006">
    <property type="expression patterns" value="Expressed in vestibular membrane of cochlear duct and 223 other cell types or tissues"/>
</dbReference>
<dbReference type="ExpressionAtlas" id="Q04888">
    <property type="expression patterns" value="baseline and differential"/>
</dbReference>
<dbReference type="GO" id="GO:0000785">
    <property type="term" value="C:chromatin"/>
    <property type="evidence" value="ECO:0007669"/>
    <property type="project" value="Ensembl"/>
</dbReference>
<dbReference type="GO" id="GO:0005737">
    <property type="term" value="C:cytoplasm"/>
    <property type="evidence" value="ECO:0000314"/>
    <property type="project" value="MGI"/>
</dbReference>
<dbReference type="GO" id="GO:0005741">
    <property type="term" value="C:mitochondrial outer membrane"/>
    <property type="evidence" value="ECO:0000314"/>
    <property type="project" value="MGI"/>
</dbReference>
<dbReference type="GO" id="GO:0005654">
    <property type="term" value="C:nucleoplasm"/>
    <property type="evidence" value="ECO:0000304"/>
    <property type="project" value="Reactome"/>
</dbReference>
<dbReference type="GO" id="GO:0005634">
    <property type="term" value="C:nucleus"/>
    <property type="evidence" value="ECO:0000314"/>
    <property type="project" value="UniProtKB"/>
</dbReference>
<dbReference type="GO" id="GO:0003682">
    <property type="term" value="F:chromatin binding"/>
    <property type="evidence" value="ECO:0000314"/>
    <property type="project" value="MGI"/>
</dbReference>
<dbReference type="GO" id="GO:0003677">
    <property type="term" value="F:DNA binding"/>
    <property type="evidence" value="ECO:0000314"/>
    <property type="project" value="UniProtKB"/>
</dbReference>
<dbReference type="GO" id="GO:0001216">
    <property type="term" value="F:DNA-binding transcription activator activity"/>
    <property type="evidence" value="ECO:0000250"/>
    <property type="project" value="UniProtKB"/>
</dbReference>
<dbReference type="GO" id="GO:0003700">
    <property type="term" value="F:DNA-binding transcription factor activity"/>
    <property type="evidence" value="ECO:0000314"/>
    <property type="project" value="UniProtKB"/>
</dbReference>
<dbReference type="GO" id="GO:0000981">
    <property type="term" value="F:DNA-binding transcription factor activity, RNA polymerase II-specific"/>
    <property type="evidence" value="ECO:0000314"/>
    <property type="project" value="UniProtKB"/>
</dbReference>
<dbReference type="GO" id="GO:0140297">
    <property type="term" value="F:DNA-binding transcription factor binding"/>
    <property type="evidence" value="ECO:0007669"/>
    <property type="project" value="Ensembl"/>
</dbReference>
<dbReference type="GO" id="GO:0042802">
    <property type="term" value="F:identical protein binding"/>
    <property type="evidence" value="ECO:0007669"/>
    <property type="project" value="Ensembl"/>
</dbReference>
<dbReference type="GO" id="GO:1990841">
    <property type="term" value="F:promoter-specific chromatin binding"/>
    <property type="evidence" value="ECO:0007669"/>
    <property type="project" value="Ensembl"/>
</dbReference>
<dbReference type="GO" id="GO:0000978">
    <property type="term" value="F:RNA polymerase II cis-regulatory region sequence-specific DNA binding"/>
    <property type="evidence" value="ECO:0000314"/>
    <property type="project" value="UniProtKB"/>
</dbReference>
<dbReference type="GO" id="GO:0000976">
    <property type="term" value="F:transcription cis-regulatory region binding"/>
    <property type="evidence" value="ECO:0000314"/>
    <property type="project" value="MGI"/>
</dbReference>
<dbReference type="GO" id="GO:0030154">
    <property type="term" value="P:cell differentiation"/>
    <property type="evidence" value="ECO:0000315"/>
    <property type="project" value="MGI"/>
</dbReference>
<dbReference type="GO" id="GO:0048469">
    <property type="term" value="P:cell maturation"/>
    <property type="evidence" value="ECO:0000315"/>
    <property type="project" value="MGI"/>
</dbReference>
<dbReference type="GO" id="GO:0071393">
    <property type="term" value="P:cellular response to progesterone stimulus"/>
    <property type="evidence" value="ECO:0007669"/>
    <property type="project" value="Ensembl"/>
</dbReference>
<dbReference type="GO" id="GO:0071466">
    <property type="term" value="P:cellular response to xenobiotic stimulus"/>
    <property type="evidence" value="ECO:0007669"/>
    <property type="project" value="Ensembl"/>
</dbReference>
<dbReference type="GO" id="GO:0022010">
    <property type="term" value="P:central nervous system myelination"/>
    <property type="evidence" value="ECO:0000315"/>
    <property type="project" value="UniProtKB"/>
</dbReference>
<dbReference type="GO" id="GO:0048589">
    <property type="term" value="P:developmental growth"/>
    <property type="evidence" value="ECO:0000315"/>
    <property type="project" value="MGI"/>
</dbReference>
<dbReference type="GO" id="GO:0048546">
    <property type="term" value="P:digestive tract morphogenesis"/>
    <property type="evidence" value="ECO:0000315"/>
    <property type="project" value="MGI"/>
</dbReference>
<dbReference type="GO" id="GO:0048484">
    <property type="term" value="P:enteric nervous system development"/>
    <property type="evidence" value="ECO:0000315"/>
    <property type="project" value="UniProtKB"/>
</dbReference>
<dbReference type="GO" id="GO:0001701">
    <property type="term" value="P:in utero embryonic development"/>
    <property type="evidence" value="ECO:0000316"/>
    <property type="project" value="MGI"/>
</dbReference>
<dbReference type="GO" id="GO:0032808">
    <property type="term" value="P:lacrimal gland development"/>
    <property type="evidence" value="ECO:0000315"/>
    <property type="project" value="MGI"/>
</dbReference>
<dbReference type="GO" id="GO:0030318">
    <property type="term" value="P:melanocyte differentiation"/>
    <property type="evidence" value="ECO:0000315"/>
    <property type="project" value="MGI"/>
</dbReference>
<dbReference type="GO" id="GO:0061138">
    <property type="term" value="P:morphogenesis of a branching epithelium"/>
    <property type="evidence" value="ECO:0000315"/>
    <property type="project" value="MGI"/>
</dbReference>
<dbReference type="GO" id="GO:0043066">
    <property type="term" value="P:negative regulation of apoptotic process"/>
    <property type="evidence" value="ECO:0000315"/>
    <property type="project" value="UniProtKB"/>
</dbReference>
<dbReference type="GO" id="GO:0090090">
    <property type="term" value="P:negative regulation of canonical Wnt signaling pathway"/>
    <property type="evidence" value="ECO:0000314"/>
    <property type="project" value="UniProtKB"/>
</dbReference>
<dbReference type="GO" id="GO:0045892">
    <property type="term" value="P:negative regulation of DNA-templated transcription"/>
    <property type="evidence" value="ECO:0007669"/>
    <property type="project" value="Ensembl"/>
</dbReference>
<dbReference type="GO" id="GO:0010626">
    <property type="term" value="P:negative regulation of Schwann cell proliferation"/>
    <property type="evidence" value="ECO:0007669"/>
    <property type="project" value="Ensembl"/>
</dbReference>
<dbReference type="GO" id="GO:0001755">
    <property type="term" value="P:neural crest cell migration"/>
    <property type="evidence" value="ECO:0000315"/>
    <property type="project" value="UniProtKB"/>
</dbReference>
<dbReference type="GO" id="GO:0007405">
    <property type="term" value="P:neuroblast proliferation"/>
    <property type="evidence" value="ECO:0000315"/>
    <property type="project" value="MGI"/>
</dbReference>
<dbReference type="GO" id="GO:0014003">
    <property type="term" value="P:oligodendrocyte development"/>
    <property type="evidence" value="ECO:0000315"/>
    <property type="project" value="UniProtKB"/>
</dbReference>
<dbReference type="GO" id="GO:0048709">
    <property type="term" value="P:oligodendrocyte differentiation"/>
    <property type="evidence" value="ECO:0000315"/>
    <property type="project" value="UniProtKB"/>
</dbReference>
<dbReference type="GO" id="GO:0007422">
    <property type="term" value="P:peripheral nervous system development"/>
    <property type="evidence" value="ECO:0000316"/>
    <property type="project" value="MGI"/>
</dbReference>
<dbReference type="GO" id="GO:0045893">
    <property type="term" value="P:positive regulation of DNA-templated transcription"/>
    <property type="evidence" value="ECO:0000314"/>
    <property type="project" value="UniProtKB"/>
</dbReference>
<dbReference type="GO" id="GO:0010628">
    <property type="term" value="P:positive regulation of gene expression"/>
    <property type="evidence" value="ECO:0007669"/>
    <property type="project" value="Ensembl"/>
</dbReference>
<dbReference type="GO" id="GO:0014015">
    <property type="term" value="P:positive regulation of gliogenesis"/>
    <property type="evidence" value="ECO:0000315"/>
    <property type="project" value="UniProtKB"/>
</dbReference>
<dbReference type="GO" id="GO:0031643">
    <property type="term" value="P:positive regulation of myelination"/>
    <property type="evidence" value="ECO:0007669"/>
    <property type="project" value="Ensembl"/>
</dbReference>
<dbReference type="GO" id="GO:0002052">
    <property type="term" value="P:positive regulation of neuroblast proliferation"/>
    <property type="evidence" value="ECO:0000315"/>
    <property type="project" value="MGI"/>
</dbReference>
<dbReference type="GO" id="GO:0045944">
    <property type="term" value="P:positive regulation of transcription by RNA polymerase II"/>
    <property type="evidence" value="ECO:0000314"/>
    <property type="project" value="MGI"/>
</dbReference>
<dbReference type="GO" id="GO:0006366">
    <property type="term" value="P:transcription by RNA polymerase II"/>
    <property type="evidence" value="ECO:0000315"/>
    <property type="project" value="MGI"/>
</dbReference>
<dbReference type="GO" id="GO:0006368">
    <property type="term" value="P:transcription elongation by RNA polymerase II"/>
    <property type="evidence" value="ECO:0007669"/>
    <property type="project" value="Ensembl"/>
</dbReference>
<dbReference type="CDD" id="cd22031">
    <property type="entry name" value="HMG-box_SoxE"/>
    <property type="match status" value="1"/>
</dbReference>
<dbReference type="FunFam" id="1.10.30.10:FF:000004">
    <property type="entry name" value="Transcription factor SOX-10"/>
    <property type="match status" value="1"/>
</dbReference>
<dbReference type="Gene3D" id="1.10.30.10">
    <property type="entry name" value="High mobility group box domain"/>
    <property type="match status" value="1"/>
</dbReference>
<dbReference type="InterPro" id="IPR009071">
    <property type="entry name" value="HMG_box_dom"/>
</dbReference>
<dbReference type="InterPro" id="IPR036910">
    <property type="entry name" value="HMG_box_dom_sf"/>
</dbReference>
<dbReference type="InterPro" id="IPR022151">
    <property type="entry name" value="Sox_N"/>
</dbReference>
<dbReference type="InterPro" id="IPR050917">
    <property type="entry name" value="SOX_TF"/>
</dbReference>
<dbReference type="PANTHER" id="PTHR45803">
    <property type="entry name" value="SOX100B"/>
    <property type="match status" value="1"/>
</dbReference>
<dbReference type="PANTHER" id="PTHR45803:SF6">
    <property type="entry name" value="TRANSCRIPTION FACTOR SOX-10"/>
    <property type="match status" value="1"/>
</dbReference>
<dbReference type="Pfam" id="PF00505">
    <property type="entry name" value="HMG_box"/>
    <property type="match status" value="1"/>
</dbReference>
<dbReference type="Pfam" id="PF12444">
    <property type="entry name" value="Sox_N"/>
    <property type="match status" value="1"/>
</dbReference>
<dbReference type="SMART" id="SM00398">
    <property type="entry name" value="HMG"/>
    <property type="match status" value="1"/>
</dbReference>
<dbReference type="SUPFAM" id="SSF47095">
    <property type="entry name" value="HMG-box"/>
    <property type="match status" value="1"/>
</dbReference>
<dbReference type="PROSITE" id="PS50118">
    <property type="entry name" value="HMG_BOX_2"/>
    <property type="match status" value="1"/>
</dbReference>
<keyword id="KW-0010">Activator</keyword>
<keyword id="KW-0963">Cytoplasm</keyword>
<keyword id="KW-0238">DNA-binding</keyword>
<keyword id="KW-0472">Membrane</keyword>
<keyword id="KW-0496">Mitochondrion</keyword>
<keyword id="KW-1000">Mitochondrion outer membrane</keyword>
<keyword id="KW-0539">Nucleus</keyword>
<keyword id="KW-0597">Phosphoprotein</keyword>
<keyword id="KW-1185">Reference proteome</keyword>
<keyword id="KW-0804">Transcription</keyword>
<keyword id="KW-0805">Transcription regulation</keyword>
<accession>Q04888</accession>
<accession>O08518</accession>
<accession>O09141</accession>
<accession>O54856</accession>
<accession>P70416</accession>